<gene>
    <name type="primary">ARF10</name>
    <name type="ORF">OsI_016103</name>
    <name type="ORF">OSIGBa0145G11.4</name>
</gene>
<evidence type="ECO:0000250" key="1"/>
<evidence type="ECO:0000255" key="2">
    <source>
        <dbReference type="PROSITE-ProRule" id="PRU00326"/>
    </source>
</evidence>
<evidence type="ECO:0000255" key="3">
    <source>
        <dbReference type="PROSITE-ProRule" id="PRU01081"/>
    </source>
</evidence>
<evidence type="ECO:0000256" key="4">
    <source>
        <dbReference type="SAM" id="MobiDB-lite"/>
    </source>
</evidence>
<evidence type="ECO:0000305" key="5"/>
<comment type="function">
    <text>Auxin response factors (ARFs) are transcriptional factors that bind specifically to the DNA sequence 5'-TGTCTC-3' found in the auxin-responsive promoter elements (AuxREs).</text>
</comment>
<comment type="subunit">
    <text evidence="1">Homodimers and heterodimers.</text>
</comment>
<comment type="subcellular location">
    <subcellularLocation>
        <location evidence="2">Nucleus</location>
    </subcellularLocation>
</comment>
<comment type="domain">
    <text>Interactions between auxin response factors (ARFs) and Aux/IAA proteins occur through their C-terminal dimerization domains III and IV.</text>
</comment>
<comment type="similarity">
    <text evidence="5">Belongs to the ARF family.</text>
</comment>
<comment type="sequence caution" evidence="5">
    <conflict type="erroneous initiation">
        <sequence resource="EMBL-CDS" id="CAH67605"/>
    </conflict>
</comment>
<feature type="chain" id="PRO_0000299264" description="Auxin response factor 10">
    <location>
        <begin position="1"/>
        <end position="699"/>
    </location>
</feature>
<feature type="domain" description="PB1" evidence="3">
    <location>
        <begin position="613"/>
        <end position="693"/>
    </location>
</feature>
<feature type="DNA-binding region" description="TF-B3" evidence="2">
    <location>
        <begin position="125"/>
        <end position="227"/>
    </location>
</feature>
<feature type="region of interest" description="Disordered" evidence="4">
    <location>
        <begin position="108"/>
        <end position="136"/>
    </location>
</feature>
<feature type="region of interest" description="Disordered" evidence="4">
    <location>
        <begin position="505"/>
        <end position="533"/>
    </location>
</feature>
<feature type="region of interest" description="Disordered" evidence="4">
    <location>
        <begin position="551"/>
        <end position="595"/>
    </location>
</feature>
<feature type="compositionally biased region" description="Basic and acidic residues" evidence="4">
    <location>
        <begin position="110"/>
        <end position="119"/>
    </location>
</feature>
<feature type="compositionally biased region" description="Polar residues" evidence="4">
    <location>
        <begin position="125"/>
        <end position="135"/>
    </location>
</feature>
<feature type="compositionally biased region" description="Polar residues" evidence="4">
    <location>
        <begin position="570"/>
        <end position="593"/>
    </location>
</feature>
<proteinExistence type="inferred from homology"/>
<organism>
    <name type="scientific">Oryza sativa subsp. indica</name>
    <name type="common">Rice</name>
    <dbReference type="NCBI Taxonomy" id="39946"/>
    <lineage>
        <taxon>Eukaryota</taxon>
        <taxon>Viridiplantae</taxon>
        <taxon>Streptophyta</taxon>
        <taxon>Embryophyta</taxon>
        <taxon>Tracheophyta</taxon>
        <taxon>Spermatophyta</taxon>
        <taxon>Magnoliopsida</taxon>
        <taxon>Liliopsida</taxon>
        <taxon>Poales</taxon>
        <taxon>Poaceae</taxon>
        <taxon>BOP clade</taxon>
        <taxon>Oryzoideae</taxon>
        <taxon>Oryzeae</taxon>
        <taxon>Oryzinae</taxon>
        <taxon>Oryza</taxon>
        <taxon>Oryza sativa</taxon>
    </lineage>
</organism>
<name>ARFJ_ORYSI</name>
<protein>
    <recommendedName>
        <fullName>Auxin response factor 10</fullName>
    </recommendedName>
</protein>
<keyword id="KW-0927">Auxin signaling pathway</keyword>
<keyword id="KW-0238">DNA-binding</keyword>
<keyword id="KW-0539">Nucleus</keyword>
<keyword id="KW-1185">Reference proteome</keyword>
<keyword id="KW-0804">Transcription</keyword>
<keyword id="KW-0805">Transcription regulation</keyword>
<accession>Q01I35</accession>
<accession>A2XVL0</accession>
<reference key="1">
    <citation type="journal article" date="2002" name="Nature">
        <title>Sequence and analysis of rice chromosome 4.</title>
        <authorList>
            <person name="Feng Q."/>
            <person name="Zhang Y."/>
            <person name="Hao P."/>
            <person name="Wang S."/>
            <person name="Fu G."/>
            <person name="Huang Y."/>
            <person name="Li Y."/>
            <person name="Zhu J."/>
            <person name="Liu Y."/>
            <person name="Hu X."/>
            <person name="Jia P."/>
            <person name="Zhang Y."/>
            <person name="Zhao Q."/>
            <person name="Ying K."/>
            <person name="Yu S."/>
            <person name="Tang Y."/>
            <person name="Weng Q."/>
            <person name="Zhang L."/>
            <person name="Lu Y."/>
            <person name="Mu J."/>
            <person name="Lu Y."/>
            <person name="Zhang L.S."/>
            <person name="Yu Z."/>
            <person name="Fan D."/>
            <person name="Liu X."/>
            <person name="Lu T."/>
            <person name="Li C."/>
            <person name="Wu Y."/>
            <person name="Sun T."/>
            <person name="Lei H."/>
            <person name="Li T."/>
            <person name="Hu H."/>
            <person name="Guan J."/>
            <person name="Wu M."/>
            <person name="Zhang R."/>
            <person name="Zhou B."/>
            <person name="Chen Z."/>
            <person name="Chen L."/>
            <person name="Jin Z."/>
            <person name="Wang R."/>
            <person name="Yin H."/>
            <person name="Cai Z."/>
            <person name="Ren S."/>
            <person name="Lv G."/>
            <person name="Gu W."/>
            <person name="Zhu G."/>
            <person name="Tu Y."/>
            <person name="Jia J."/>
            <person name="Zhang Y."/>
            <person name="Chen J."/>
            <person name="Kang H."/>
            <person name="Chen X."/>
            <person name="Shao C."/>
            <person name="Sun Y."/>
            <person name="Hu Q."/>
            <person name="Zhang X."/>
            <person name="Zhang W."/>
            <person name="Wang L."/>
            <person name="Ding C."/>
            <person name="Sheng H."/>
            <person name="Gu J."/>
            <person name="Chen S."/>
            <person name="Ni L."/>
            <person name="Zhu F."/>
            <person name="Chen W."/>
            <person name="Lan L."/>
            <person name="Lai Y."/>
            <person name="Cheng Z."/>
            <person name="Gu M."/>
            <person name="Jiang J."/>
            <person name="Li J."/>
            <person name="Hong G."/>
            <person name="Xue Y."/>
            <person name="Han B."/>
        </authorList>
    </citation>
    <scope>NUCLEOTIDE SEQUENCE [LARGE SCALE GENOMIC DNA]</scope>
    <source>
        <strain>cv. Guang-Lu-Ai No.4</strain>
    </source>
</reference>
<reference key="2">
    <citation type="journal article" date="2005" name="PLoS Biol.">
        <title>The genomes of Oryza sativa: a history of duplications.</title>
        <authorList>
            <person name="Yu J."/>
            <person name="Wang J."/>
            <person name="Lin W."/>
            <person name="Li S."/>
            <person name="Li H."/>
            <person name="Zhou J."/>
            <person name="Ni P."/>
            <person name="Dong W."/>
            <person name="Hu S."/>
            <person name="Zeng C."/>
            <person name="Zhang J."/>
            <person name="Zhang Y."/>
            <person name="Li R."/>
            <person name="Xu Z."/>
            <person name="Li S."/>
            <person name="Li X."/>
            <person name="Zheng H."/>
            <person name="Cong L."/>
            <person name="Lin L."/>
            <person name="Yin J."/>
            <person name="Geng J."/>
            <person name="Li G."/>
            <person name="Shi J."/>
            <person name="Liu J."/>
            <person name="Lv H."/>
            <person name="Li J."/>
            <person name="Wang J."/>
            <person name="Deng Y."/>
            <person name="Ran L."/>
            <person name="Shi X."/>
            <person name="Wang X."/>
            <person name="Wu Q."/>
            <person name="Li C."/>
            <person name="Ren X."/>
            <person name="Wang J."/>
            <person name="Wang X."/>
            <person name="Li D."/>
            <person name="Liu D."/>
            <person name="Zhang X."/>
            <person name="Ji Z."/>
            <person name="Zhao W."/>
            <person name="Sun Y."/>
            <person name="Zhang Z."/>
            <person name="Bao J."/>
            <person name="Han Y."/>
            <person name="Dong L."/>
            <person name="Ji J."/>
            <person name="Chen P."/>
            <person name="Wu S."/>
            <person name="Liu J."/>
            <person name="Xiao Y."/>
            <person name="Bu D."/>
            <person name="Tan J."/>
            <person name="Yang L."/>
            <person name="Ye C."/>
            <person name="Zhang J."/>
            <person name="Xu J."/>
            <person name="Zhou Y."/>
            <person name="Yu Y."/>
            <person name="Zhang B."/>
            <person name="Zhuang S."/>
            <person name="Wei H."/>
            <person name="Liu B."/>
            <person name="Lei M."/>
            <person name="Yu H."/>
            <person name="Li Y."/>
            <person name="Xu H."/>
            <person name="Wei S."/>
            <person name="He X."/>
            <person name="Fang L."/>
            <person name="Zhang Z."/>
            <person name="Zhang Y."/>
            <person name="Huang X."/>
            <person name="Su Z."/>
            <person name="Tong W."/>
            <person name="Li J."/>
            <person name="Tong Z."/>
            <person name="Li S."/>
            <person name="Ye J."/>
            <person name="Wang L."/>
            <person name="Fang L."/>
            <person name="Lei T."/>
            <person name="Chen C.-S."/>
            <person name="Chen H.-C."/>
            <person name="Xu Z."/>
            <person name="Li H."/>
            <person name="Huang H."/>
            <person name="Zhang F."/>
            <person name="Xu H."/>
            <person name="Li N."/>
            <person name="Zhao C."/>
            <person name="Li S."/>
            <person name="Dong L."/>
            <person name="Huang Y."/>
            <person name="Li L."/>
            <person name="Xi Y."/>
            <person name="Qi Q."/>
            <person name="Li W."/>
            <person name="Zhang B."/>
            <person name="Hu W."/>
            <person name="Zhang Y."/>
            <person name="Tian X."/>
            <person name="Jiao Y."/>
            <person name="Liang X."/>
            <person name="Jin J."/>
            <person name="Gao L."/>
            <person name="Zheng W."/>
            <person name="Hao B."/>
            <person name="Liu S.-M."/>
            <person name="Wang W."/>
            <person name="Yuan L."/>
            <person name="Cao M."/>
            <person name="McDermott J."/>
            <person name="Samudrala R."/>
            <person name="Wang J."/>
            <person name="Wong G.K.-S."/>
            <person name="Yang H."/>
        </authorList>
    </citation>
    <scope>NUCLEOTIDE SEQUENCE [LARGE SCALE GENOMIC DNA]</scope>
    <source>
        <strain>cv. 93-11</strain>
    </source>
</reference>
<reference key="3">
    <citation type="journal article" date="2007" name="Gene">
        <title>Genome-wide analysis of the auxin response factors (ARF) gene family in rice (Oryza sativa).</title>
        <authorList>
            <person name="Wang D."/>
            <person name="Pei K."/>
            <person name="Fu Y."/>
            <person name="Sun Z."/>
            <person name="Li S."/>
            <person name="Liu H."/>
            <person name="Tang K."/>
            <person name="Han B."/>
            <person name="Tao Y."/>
        </authorList>
    </citation>
    <scope>GENE FAMILY</scope>
    <scope>NOMENCLATURE</scope>
</reference>
<sequence>MLTFMELAGPTEGDGGGSVDSQLWAACAGSMSSVPPVGAAVYYFPQGHAEQASAAVDLSSARVPPLVPCRVVAVRFMADAESDEVFAKIRLVPLRPGDAVVDVGEAAAAEARREEENSRPRPTSFAKTLTQSDANNGGGFSVPRFCAETIFPELDYSSEPPVQSVCAKDVHGVEWTFRHIYRGTPRRHLLTTGWSPFVNKKQLTAGDSIVFMRDEGGNIHVGLRRAKRGFCSIGGDDESLSSIPGWDQYRGLMRRNATATATGGRTPPKGKVPPENVLTAATRATTGQPFEVLYYPRASTPEFCVRAAAVRTAMAVQWCPGMRFKMAFETEDSSRISWFMGTVAGVQASDPVRWPQSPWRLLQVTWDEPELLQNVKRVCPWLVELVSSMPNLHLPSFSPPRKKPRNPPYAELPLEGQIFTGPVFPPNPMAHDHHHHHGFPFLPFPDSSAQPAGIQGARHAQFASPFPEFHIGNLQPNLMLYAGIRLPPADRAAPAPRPPRIIISTDLTIGSPGKPDDAACSPSSGGKKIDDTKPRGFLLFGQAILTEEQIKNGNSDGRPASPNWDAEKAPNTSEGSDSGVTQGSPTKNTTPSWSLPYFGGNNISRASEYELNPGQCKVFVESETVGRSLDLSALSSFEELYACLSDMFSIGSDELRSHLVYRSPAGEVKHAGDEPFCAFVKSARKLRILTDAGSDNLGD</sequence>
<dbReference type="EMBL" id="CR855217">
    <property type="protein sequence ID" value="CAH67605.1"/>
    <property type="status" value="ALT_INIT"/>
    <property type="molecule type" value="Genomic_DNA"/>
</dbReference>
<dbReference type="EMBL" id="CM000129">
    <property type="status" value="NOT_ANNOTATED_CDS"/>
    <property type="molecule type" value="Genomic_DNA"/>
</dbReference>
<dbReference type="SMR" id="Q01I35"/>
<dbReference type="STRING" id="39946.Q01I35"/>
<dbReference type="EnsemblPlants" id="BGIOSGA016767-TA">
    <property type="protein sequence ID" value="BGIOSGA016767-PA"/>
    <property type="gene ID" value="BGIOSGA016767"/>
</dbReference>
<dbReference type="EnsemblPlants" id="OsGoSa_04g0019800.01">
    <property type="protein sequence ID" value="OsGoSa_04g0019800.01"/>
    <property type="gene ID" value="OsGoSa_04g0019800"/>
</dbReference>
<dbReference type="EnsemblPlants" id="OsIR64_04g0019340.02">
    <property type="protein sequence ID" value="OsIR64_04g0019340.02"/>
    <property type="gene ID" value="OsIR64_04g0019340"/>
</dbReference>
<dbReference type="EnsemblPlants" id="OsKYG_04g0019690.01">
    <property type="protein sequence ID" value="OsKYG_04g0019690.01"/>
    <property type="gene ID" value="OsKYG_04g0019690"/>
</dbReference>
<dbReference type="EnsemblPlants" id="OsLaMu_04g0020340.01">
    <property type="protein sequence ID" value="OsLaMu_04g0020340.01"/>
    <property type="gene ID" value="OsLaMu_04g0020340"/>
</dbReference>
<dbReference type="EnsemblPlants" id="OsLima_04g0019830.01">
    <property type="protein sequence ID" value="OsLima_04g0019830.01"/>
    <property type="gene ID" value="OsLima_04g0019830"/>
</dbReference>
<dbReference type="EnsemblPlants" id="OsLiXu_04g0020170.01">
    <property type="protein sequence ID" value="OsLiXu_04g0020170.01"/>
    <property type="gene ID" value="OsLiXu_04g0020170"/>
</dbReference>
<dbReference type="EnsemblPlants" id="OsMH63_04G020700_01">
    <property type="protein sequence ID" value="OsMH63_04G020700_01"/>
    <property type="gene ID" value="OsMH63_04G020700"/>
</dbReference>
<dbReference type="EnsemblPlants" id="OsPr106_04g0020540.01">
    <property type="protein sequence ID" value="OsPr106_04g0020540.01"/>
    <property type="gene ID" value="OsPr106_04g0020540"/>
</dbReference>
<dbReference type="EnsemblPlants" id="OsZS97_04G020670_01">
    <property type="protein sequence ID" value="OsZS97_04G020670_01"/>
    <property type="gene ID" value="OsZS97_04G020670"/>
</dbReference>
<dbReference type="Gramene" id="BGIOSGA016767-TA">
    <property type="protein sequence ID" value="BGIOSGA016767-PA"/>
    <property type="gene ID" value="BGIOSGA016767"/>
</dbReference>
<dbReference type="Gramene" id="OsGoSa_04g0019800.01">
    <property type="protein sequence ID" value="OsGoSa_04g0019800.01"/>
    <property type="gene ID" value="OsGoSa_04g0019800"/>
</dbReference>
<dbReference type="Gramene" id="OsIR64_04g0019340.02">
    <property type="protein sequence ID" value="OsIR64_04g0019340.02"/>
    <property type="gene ID" value="OsIR64_04g0019340"/>
</dbReference>
<dbReference type="Gramene" id="OsKYG_04g0019690.01">
    <property type="protein sequence ID" value="OsKYG_04g0019690.01"/>
    <property type="gene ID" value="OsKYG_04g0019690"/>
</dbReference>
<dbReference type="Gramene" id="OsLaMu_04g0020340.01">
    <property type="protein sequence ID" value="OsLaMu_04g0020340.01"/>
    <property type="gene ID" value="OsLaMu_04g0020340"/>
</dbReference>
<dbReference type="Gramene" id="OsLima_04g0019830.01">
    <property type="protein sequence ID" value="OsLima_04g0019830.01"/>
    <property type="gene ID" value="OsLima_04g0019830"/>
</dbReference>
<dbReference type="Gramene" id="OsLiXu_04g0020170.01">
    <property type="protein sequence ID" value="OsLiXu_04g0020170.01"/>
    <property type="gene ID" value="OsLiXu_04g0020170"/>
</dbReference>
<dbReference type="Gramene" id="OsMH63_04G020700_01">
    <property type="protein sequence ID" value="OsMH63_04G020700_01"/>
    <property type="gene ID" value="OsMH63_04G020700"/>
</dbReference>
<dbReference type="Gramene" id="OsPr106_04g0020540.01">
    <property type="protein sequence ID" value="OsPr106_04g0020540.01"/>
    <property type="gene ID" value="OsPr106_04g0020540"/>
</dbReference>
<dbReference type="Gramene" id="OsZS97_04G020670_01">
    <property type="protein sequence ID" value="OsZS97_04G020670_01"/>
    <property type="gene ID" value="OsZS97_04G020670"/>
</dbReference>
<dbReference type="HOGENOM" id="CLU_002626_3_5_1"/>
<dbReference type="OMA" id="DEPFCAF"/>
<dbReference type="OrthoDB" id="621520at2759"/>
<dbReference type="Proteomes" id="UP000007015">
    <property type="component" value="Chromosome 4"/>
</dbReference>
<dbReference type="ExpressionAtlas" id="Q01I35">
    <property type="expression patterns" value="differential"/>
</dbReference>
<dbReference type="GO" id="GO:0005634">
    <property type="term" value="C:nucleus"/>
    <property type="evidence" value="ECO:0007669"/>
    <property type="project" value="UniProtKB-SubCell"/>
</dbReference>
<dbReference type="GO" id="GO:0003677">
    <property type="term" value="F:DNA binding"/>
    <property type="evidence" value="ECO:0007669"/>
    <property type="project" value="UniProtKB-KW"/>
</dbReference>
<dbReference type="GO" id="GO:0009734">
    <property type="term" value="P:auxin-activated signaling pathway"/>
    <property type="evidence" value="ECO:0007669"/>
    <property type="project" value="UniProtKB-KW"/>
</dbReference>
<dbReference type="GO" id="GO:0006355">
    <property type="term" value="P:regulation of DNA-templated transcription"/>
    <property type="evidence" value="ECO:0007669"/>
    <property type="project" value="InterPro"/>
</dbReference>
<dbReference type="CDD" id="cd10017">
    <property type="entry name" value="B3_DNA"/>
    <property type="match status" value="1"/>
</dbReference>
<dbReference type="FunFam" id="2.30.30.1040:FF:000002">
    <property type="entry name" value="Auxin response factor"/>
    <property type="match status" value="1"/>
</dbReference>
<dbReference type="FunFam" id="2.40.330.10:FF:000001">
    <property type="entry name" value="Auxin response factor"/>
    <property type="match status" value="1"/>
</dbReference>
<dbReference type="Gene3D" id="2.30.30.1040">
    <property type="match status" value="1"/>
</dbReference>
<dbReference type="Gene3D" id="2.40.330.10">
    <property type="entry name" value="DNA-binding pseudobarrel domain"/>
    <property type="match status" value="1"/>
</dbReference>
<dbReference type="Gene3D" id="3.10.20.90">
    <property type="entry name" value="Phosphatidylinositol 3-kinase Catalytic Subunit, Chain A, domain 1"/>
    <property type="match status" value="1"/>
</dbReference>
<dbReference type="InterPro" id="IPR010525">
    <property type="entry name" value="ARF_dom"/>
</dbReference>
<dbReference type="InterPro" id="IPR044835">
    <property type="entry name" value="ARF_plant"/>
</dbReference>
<dbReference type="InterPro" id="IPR003340">
    <property type="entry name" value="B3_DNA-bd"/>
</dbReference>
<dbReference type="InterPro" id="IPR015300">
    <property type="entry name" value="DNA-bd_pseudobarrel_sf"/>
</dbReference>
<dbReference type="InterPro" id="IPR053793">
    <property type="entry name" value="PB1-like"/>
</dbReference>
<dbReference type="PANTHER" id="PTHR31384:SF86">
    <property type="entry name" value="AUXIN RESPONSE FACTOR 10"/>
    <property type="match status" value="1"/>
</dbReference>
<dbReference type="PANTHER" id="PTHR31384">
    <property type="entry name" value="AUXIN RESPONSE FACTOR 4-RELATED"/>
    <property type="match status" value="1"/>
</dbReference>
<dbReference type="Pfam" id="PF06507">
    <property type="entry name" value="ARF_AD"/>
    <property type="match status" value="1"/>
</dbReference>
<dbReference type="Pfam" id="PF02362">
    <property type="entry name" value="B3"/>
    <property type="match status" value="1"/>
</dbReference>
<dbReference type="SMART" id="SM01019">
    <property type="entry name" value="B3"/>
    <property type="match status" value="1"/>
</dbReference>
<dbReference type="SUPFAM" id="SSF101936">
    <property type="entry name" value="DNA-binding pseudobarrel domain"/>
    <property type="match status" value="1"/>
</dbReference>
<dbReference type="PROSITE" id="PS50863">
    <property type="entry name" value="B3"/>
    <property type="match status" value="1"/>
</dbReference>
<dbReference type="PROSITE" id="PS51745">
    <property type="entry name" value="PB1"/>
    <property type="match status" value="1"/>
</dbReference>